<reference key="1">
    <citation type="journal article" date="2003" name="Mol. Microbiol.">
        <title>Genome-based analysis of virulence genes in a non-biofilm-forming Staphylococcus epidermidis strain (ATCC 12228).</title>
        <authorList>
            <person name="Zhang Y.-Q."/>
            <person name="Ren S.-X."/>
            <person name="Li H.-L."/>
            <person name="Wang Y.-X."/>
            <person name="Fu G."/>
            <person name="Yang J."/>
            <person name="Qin Z.-Q."/>
            <person name="Miao Y.-G."/>
            <person name="Wang W.-Y."/>
            <person name="Chen R.-S."/>
            <person name="Shen Y."/>
            <person name="Chen Z."/>
            <person name="Yuan Z.-H."/>
            <person name="Zhao G.-P."/>
            <person name="Qu D."/>
            <person name="Danchin A."/>
            <person name="Wen Y.-M."/>
        </authorList>
    </citation>
    <scope>NUCLEOTIDE SEQUENCE [LARGE SCALE GENOMIC DNA]</scope>
    <source>
        <strain>ATCC 12228 / FDA PCI 1200</strain>
    </source>
</reference>
<evidence type="ECO:0000255" key="1">
    <source>
        <dbReference type="HAMAP-Rule" id="MF_01210"/>
    </source>
</evidence>
<name>CARB_STAES</name>
<protein>
    <recommendedName>
        <fullName evidence="1">Carbamoyl phosphate synthase large chain</fullName>
        <ecNumber evidence="1">6.3.4.16</ecNumber>
        <ecNumber evidence="1">6.3.5.5</ecNumber>
    </recommendedName>
    <alternativeName>
        <fullName evidence="1">Carbamoyl phosphate synthetase ammonia chain</fullName>
    </alternativeName>
</protein>
<comment type="function">
    <text evidence="1">Large subunit of the glutamine-dependent carbamoyl phosphate synthetase (CPSase). CPSase catalyzes the formation of carbamoyl phosphate from the ammonia moiety of glutamine, carbonate, and phosphate donated by ATP, constituting the first step of 2 biosynthetic pathways, one leading to arginine and/or urea and the other to pyrimidine nucleotides. The large subunit (synthetase) binds the substrates ammonia (free or transferred from glutamine from the small subunit), hydrogencarbonate and ATP and carries out an ATP-coupled ligase reaction, activating hydrogencarbonate by forming carboxy phosphate which reacts with ammonia to form carbamoyl phosphate.</text>
</comment>
<comment type="catalytic activity">
    <reaction evidence="1">
        <text>hydrogencarbonate + L-glutamine + 2 ATP + H2O = carbamoyl phosphate + L-glutamate + 2 ADP + phosphate + 2 H(+)</text>
        <dbReference type="Rhea" id="RHEA:18633"/>
        <dbReference type="ChEBI" id="CHEBI:15377"/>
        <dbReference type="ChEBI" id="CHEBI:15378"/>
        <dbReference type="ChEBI" id="CHEBI:17544"/>
        <dbReference type="ChEBI" id="CHEBI:29985"/>
        <dbReference type="ChEBI" id="CHEBI:30616"/>
        <dbReference type="ChEBI" id="CHEBI:43474"/>
        <dbReference type="ChEBI" id="CHEBI:58228"/>
        <dbReference type="ChEBI" id="CHEBI:58359"/>
        <dbReference type="ChEBI" id="CHEBI:456216"/>
        <dbReference type="EC" id="6.3.5.5"/>
    </reaction>
</comment>
<comment type="catalytic activity">
    <molecule>Carbamoyl phosphate synthase large chain</molecule>
    <reaction evidence="1">
        <text>hydrogencarbonate + NH4(+) + 2 ATP = carbamoyl phosphate + 2 ADP + phosphate + 2 H(+)</text>
        <dbReference type="Rhea" id="RHEA:18029"/>
        <dbReference type="ChEBI" id="CHEBI:15378"/>
        <dbReference type="ChEBI" id="CHEBI:17544"/>
        <dbReference type="ChEBI" id="CHEBI:28938"/>
        <dbReference type="ChEBI" id="CHEBI:30616"/>
        <dbReference type="ChEBI" id="CHEBI:43474"/>
        <dbReference type="ChEBI" id="CHEBI:58228"/>
        <dbReference type="ChEBI" id="CHEBI:456216"/>
        <dbReference type="EC" id="6.3.4.16"/>
    </reaction>
</comment>
<comment type="cofactor">
    <cofactor evidence="1">
        <name>Mg(2+)</name>
        <dbReference type="ChEBI" id="CHEBI:18420"/>
    </cofactor>
    <cofactor evidence="1">
        <name>Mn(2+)</name>
        <dbReference type="ChEBI" id="CHEBI:29035"/>
    </cofactor>
    <text evidence="1">Binds 4 Mg(2+) or Mn(2+) ions per subunit.</text>
</comment>
<comment type="pathway">
    <text evidence="1">Amino-acid biosynthesis; L-arginine biosynthesis; carbamoyl phosphate from bicarbonate: step 1/1.</text>
</comment>
<comment type="pathway">
    <text evidence="1">Pyrimidine metabolism; UMP biosynthesis via de novo pathway; (S)-dihydroorotate from bicarbonate: step 1/3.</text>
</comment>
<comment type="subunit">
    <text evidence="1">Composed of two chains; the small (or glutamine) chain promotes the hydrolysis of glutamine to ammonia, which is used by the large (or ammonia) chain to synthesize carbamoyl phosphate. Tetramer of heterodimers (alpha,beta)4.</text>
</comment>
<comment type="domain">
    <text evidence="1">The large subunit is composed of 2 ATP-grasp domains that are involved in binding the 2 ATP molecules needed for carbamoyl phosphate synthesis. The N-terminal ATP-grasp domain (referred to as the carboxyphosphate synthetic component) catalyzes the ATP-dependent phosphorylation of hydrogencarbonate to carboxyphosphate and the subsequent nucleophilic attack by ammonia to form a carbamate intermediate. The C-terminal ATP-grasp domain (referred to as the carbamoyl phosphate synthetic component) then catalyzes the phosphorylation of carbamate with the second ATP to form the end product carbamoyl phosphate. The reactive and unstable enzyme intermediates are sequentially channeled from one active site to the next through the interior of the protein over a distance of at least 96 A.</text>
</comment>
<comment type="similarity">
    <text evidence="1">Belongs to the CarB family.</text>
</comment>
<organism>
    <name type="scientific">Staphylococcus epidermidis (strain ATCC 12228 / FDA PCI 1200)</name>
    <dbReference type="NCBI Taxonomy" id="176280"/>
    <lineage>
        <taxon>Bacteria</taxon>
        <taxon>Bacillati</taxon>
        <taxon>Bacillota</taxon>
        <taxon>Bacilli</taxon>
        <taxon>Bacillales</taxon>
        <taxon>Staphylococcaceae</taxon>
        <taxon>Staphylococcus</taxon>
    </lineage>
</organism>
<keyword id="KW-0028">Amino-acid biosynthesis</keyword>
<keyword id="KW-0055">Arginine biosynthesis</keyword>
<keyword id="KW-0067">ATP-binding</keyword>
<keyword id="KW-0436">Ligase</keyword>
<keyword id="KW-0460">Magnesium</keyword>
<keyword id="KW-0464">Manganese</keyword>
<keyword id="KW-0479">Metal-binding</keyword>
<keyword id="KW-0547">Nucleotide-binding</keyword>
<keyword id="KW-0665">Pyrimidine biosynthesis</keyword>
<keyword id="KW-0677">Repeat</keyword>
<gene>
    <name evidence="1" type="primary">carB</name>
    <name type="ordered locus">SE_0879</name>
</gene>
<accession>Q8CPJ4</accession>
<dbReference type="EC" id="6.3.4.16" evidence="1"/>
<dbReference type="EC" id="6.3.5.5" evidence="1"/>
<dbReference type="EMBL" id="AE015929">
    <property type="protein sequence ID" value="AAO04476.1"/>
    <property type="molecule type" value="Genomic_DNA"/>
</dbReference>
<dbReference type="RefSeq" id="NP_764434.1">
    <property type="nucleotide sequence ID" value="NC_004461.1"/>
</dbReference>
<dbReference type="RefSeq" id="WP_001830088.1">
    <property type="nucleotide sequence ID" value="NZ_WBME01000063.1"/>
</dbReference>
<dbReference type="SMR" id="Q8CPJ4"/>
<dbReference type="KEGG" id="sep:SE_0879"/>
<dbReference type="PATRIC" id="fig|176280.10.peg.851"/>
<dbReference type="eggNOG" id="COG0458">
    <property type="taxonomic scope" value="Bacteria"/>
</dbReference>
<dbReference type="HOGENOM" id="CLU_000513_1_2_9"/>
<dbReference type="OrthoDB" id="9804197at2"/>
<dbReference type="UniPathway" id="UPA00068">
    <property type="reaction ID" value="UER00171"/>
</dbReference>
<dbReference type="UniPathway" id="UPA00070">
    <property type="reaction ID" value="UER00115"/>
</dbReference>
<dbReference type="Proteomes" id="UP000001411">
    <property type="component" value="Chromosome"/>
</dbReference>
<dbReference type="GO" id="GO:0005737">
    <property type="term" value="C:cytoplasm"/>
    <property type="evidence" value="ECO:0007669"/>
    <property type="project" value="TreeGrafter"/>
</dbReference>
<dbReference type="GO" id="GO:0005524">
    <property type="term" value="F:ATP binding"/>
    <property type="evidence" value="ECO:0007669"/>
    <property type="project" value="UniProtKB-UniRule"/>
</dbReference>
<dbReference type="GO" id="GO:0004087">
    <property type="term" value="F:carbamoyl-phosphate synthase (ammonia) activity"/>
    <property type="evidence" value="ECO:0007669"/>
    <property type="project" value="RHEA"/>
</dbReference>
<dbReference type="GO" id="GO:0004088">
    <property type="term" value="F:carbamoyl-phosphate synthase (glutamine-hydrolyzing) activity"/>
    <property type="evidence" value="ECO:0007669"/>
    <property type="project" value="UniProtKB-UniRule"/>
</dbReference>
<dbReference type="GO" id="GO:0046872">
    <property type="term" value="F:metal ion binding"/>
    <property type="evidence" value="ECO:0007669"/>
    <property type="project" value="UniProtKB-KW"/>
</dbReference>
<dbReference type="GO" id="GO:0044205">
    <property type="term" value="P:'de novo' UMP biosynthetic process"/>
    <property type="evidence" value="ECO:0007669"/>
    <property type="project" value="UniProtKB-UniRule"/>
</dbReference>
<dbReference type="GO" id="GO:0006541">
    <property type="term" value="P:glutamine metabolic process"/>
    <property type="evidence" value="ECO:0007669"/>
    <property type="project" value="TreeGrafter"/>
</dbReference>
<dbReference type="GO" id="GO:0006526">
    <property type="term" value="P:L-arginine biosynthetic process"/>
    <property type="evidence" value="ECO:0007669"/>
    <property type="project" value="UniProtKB-UniRule"/>
</dbReference>
<dbReference type="CDD" id="cd01424">
    <property type="entry name" value="MGS_CPS_II"/>
    <property type="match status" value="1"/>
</dbReference>
<dbReference type="FunFam" id="1.10.1030.10:FF:000002">
    <property type="entry name" value="Carbamoyl-phosphate synthase large chain"/>
    <property type="match status" value="1"/>
</dbReference>
<dbReference type="FunFam" id="3.30.1490.20:FF:000001">
    <property type="entry name" value="Carbamoyl-phosphate synthase large chain"/>
    <property type="match status" value="1"/>
</dbReference>
<dbReference type="FunFam" id="3.30.470.20:FF:000001">
    <property type="entry name" value="Carbamoyl-phosphate synthase large chain"/>
    <property type="match status" value="1"/>
</dbReference>
<dbReference type="FunFam" id="3.30.470.20:FF:000026">
    <property type="entry name" value="Carbamoyl-phosphate synthase large chain"/>
    <property type="match status" value="1"/>
</dbReference>
<dbReference type="FunFam" id="3.40.50.1380:FF:000011">
    <property type="entry name" value="Carbamoyl-phosphate synthase large chain"/>
    <property type="match status" value="1"/>
</dbReference>
<dbReference type="FunFam" id="3.40.50.20:FF:000001">
    <property type="entry name" value="Carbamoyl-phosphate synthase large chain"/>
    <property type="match status" value="2"/>
</dbReference>
<dbReference type="Gene3D" id="3.40.50.20">
    <property type="match status" value="2"/>
</dbReference>
<dbReference type="Gene3D" id="3.30.1490.20">
    <property type="entry name" value="ATP-grasp fold, A domain"/>
    <property type="match status" value="1"/>
</dbReference>
<dbReference type="Gene3D" id="3.30.470.20">
    <property type="entry name" value="ATP-grasp fold, B domain"/>
    <property type="match status" value="2"/>
</dbReference>
<dbReference type="Gene3D" id="1.10.1030.10">
    <property type="entry name" value="Carbamoyl-phosphate synthetase, large subunit oligomerisation domain"/>
    <property type="match status" value="1"/>
</dbReference>
<dbReference type="Gene3D" id="3.40.50.1380">
    <property type="entry name" value="Methylglyoxal synthase-like domain"/>
    <property type="match status" value="1"/>
</dbReference>
<dbReference type="HAMAP" id="MF_01210_A">
    <property type="entry name" value="CPSase_L_chain_A"/>
    <property type="match status" value="1"/>
</dbReference>
<dbReference type="HAMAP" id="MF_01210_B">
    <property type="entry name" value="CPSase_L_chain_B"/>
    <property type="match status" value="1"/>
</dbReference>
<dbReference type="InterPro" id="IPR011761">
    <property type="entry name" value="ATP-grasp"/>
</dbReference>
<dbReference type="InterPro" id="IPR013815">
    <property type="entry name" value="ATP_grasp_subdomain_1"/>
</dbReference>
<dbReference type="InterPro" id="IPR006275">
    <property type="entry name" value="CarbamoylP_synth_lsu"/>
</dbReference>
<dbReference type="InterPro" id="IPR005480">
    <property type="entry name" value="CarbamoylP_synth_lsu_oligo"/>
</dbReference>
<dbReference type="InterPro" id="IPR036897">
    <property type="entry name" value="CarbamoylP_synth_lsu_oligo_sf"/>
</dbReference>
<dbReference type="InterPro" id="IPR005479">
    <property type="entry name" value="CbamoylP_synth_lsu-like_ATP-bd"/>
</dbReference>
<dbReference type="InterPro" id="IPR005483">
    <property type="entry name" value="CbamoylP_synth_lsu_CPSase_dom"/>
</dbReference>
<dbReference type="InterPro" id="IPR011607">
    <property type="entry name" value="MGS-like_dom"/>
</dbReference>
<dbReference type="InterPro" id="IPR036914">
    <property type="entry name" value="MGS-like_dom_sf"/>
</dbReference>
<dbReference type="InterPro" id="IPR033937">
    <property type="entry name" value="MGS_CPS_CarB"/>
</dbReference>
<dbReference type="InterPro" id="IPR016185">
    <property type="entry name" value="PreATP-grasp_dom_sf"/>
</dbReference>
<dbReference type="NCBIfam" id="TIGR01369">
    <property type="entry name" value="CPSaseII_lrg"/>
    <property type="match status" value="1"/>
</dbReference>
<dbReference type="NCBIfam" id="NF003671">
    <property type="entry name" value="PRK05294.1"/>
    <property type="match status" value="1"/>
</dbReference>
<dbReference type="NCBIfam" id="NF009455">
    <property type="entry name" value="PRK12815.1"/>
    <property type="match status" value="1"/>
</dbReference>
<dbReference type="PANTHER" id="PTHR11405:SF53">
    <property type="entry name" value="CARBAMOYL-PHOSPHATE SYNTHASE [AMMONIA], MITOCHONDRIAL"/>
    <property type="match status" value="1"/>
</dbReference>
<dbReference type="PANTHER" id="PTHR11405">
    <property type="entry name" value="CARBAMOYLTRANSFERASE FAMILY MEMBER"/>
    <property type="match status" value="1"/>
</dbReference>
<dbReference type="Pfam" id="PF02786">
    <property type="entry name" value="CPSase_L_D2"/>
    <property type="match status" value="2"/>
</dbReference>
<dbReference type="Pfam" id="PF02787">
    <property type="entry name" value="CPSase_L_D3"/>
    <property type="match status" value="1"/>
</dbReference>
<dbReference type="Pfam" id="PF02142">
    <property type="entry name" value="MGS"/>
    <property type="match status" value="1"/>
</dbReference>
<dbReference type="PRINTS" id="PR00098">
    <property type="entry name" value="CPSASE"/>
</dbReference>
<dbReference type="SMART" id="SM01096">
    <property type="entry name" value="CPSase_L_D3"/>
    <property type="match status" value="1"/>
</dbReference>
<dbReference type="SMART" id="SM01209">
    <property type="entry name" value="GARS_A"/>
    <property type="match status" value="1"/>
</dbReference>
<dbReference type="SMART" id="SM00851">
    <property type="entry name" value="MGS"/>
    <property type="match status" value="1"/>
</dbReference>
<dbReference type="SUPFAM" id="SSF48108">
    <property type="entry name" value="Carbamoyl phosphate synthetase, large subunit connection domain"/>
    <property type="match status" value="1"/>
</dbReference>
<dbReference type="SUPFAM" id="SSF56059">
    <property type="entry name" value="Glutathione synthetase ATP-binding domain-like"/>
    <property type="match status" value="2"/>
</dbReference>
<dbReference type="SUPFAM" id="SSF52335">
    <property type="entry name" value="Methylglyoxal synthase-like"/>
    <property type="match status" value="1"/>
</dbReference>
<dbReference type="SUPFAM" id="SSF52440">
    <property type="entry name" value="PreATP-grasp domain"/>
    <property type="match status" value="2"/>
</dbReference>
<dbReference type="PROSITE" id="PS50975">
    <property type="entry name" value="ATP_GRASP"/>
    <property type="match status" value="2"/>
</dbReference>
<dbReference type="PROSITE" id="PS00866">
    <property type="entry name" value="CPSASE_1"/>
    <property type="match status" value="2"/>
</dbReference>
<dbReference type="PROSITE" id="PS00867">
    <property type="entry name" value="CPSASE_2"/>
    <property type="match status" value="2"/>
</dbReference>
<dbReference type="PROSITE" id="PS51855">
    <property type="entry name" value="MGS"/>
    <property type="match status" value="1"/>
</dbReference>
<feature type="chain" id="PRO_0000145043" description="Carbamoyl phosphate synthase large chain">
    <location>
        <begin position="1"/>
        <end position="1057"/>
    </location>
</feature>
<feature type="domain" description="ATP-grasp 1" evidence="1">
    <location>
        <begin position="133"/>
        <end position="327"/>
    </location>
</feature>
<feature type="domain" description="ATP-grasp 2" evidence="1">
    <location>
        <begin position="671"/>
        <end position="861"/>
    </location>
</feature>
<feature type="domain" description="MGS-like" evidence="1">
    <location>
        <begin position="930"/>
        <end position="1057"/>
    </location>
</feature>
<feature type="region of interest" description="Carboxyphosphate synthetic domain" evidence="1">
    <location>
        <begin position="1"/>
        <end position="401"/>
    </location>
</feature>
<feature type="region of interest" description="Oligomerization domain" evidence="1">
    <location>
        <begin position="402"/>
        <end position="546"/>
    </location>
</feature>
<feature type="region of interest" description="Carbamoyl phosphate synthetic domain" evidence="1">
    <location>
        <begin position="547"/>
        <end position="929"/>
    </location>
</feature>
<feature type="region of interest" description="Allosteric domain" evidence="1">
    <location>
        <begin position="930"/>
        <end position="1057"/>
    </location>
</feature>
<feature type="binding site" evidence="1">
    <location>
        <position position="129"/>
    </location>
    <ligand>
        <name>ATP</name>
        <dbReference type="ChEBI" id="CHEBI:30616"/>
        <label>1</label>
    </ligand>
</feature>
<feature type="binding site" evidence="1">
    <location>
        <position position="169"/>
    </location>
    <ligand>
        <name>ATP</name>
        <dbReference type="ChEBI" id="CHEBI:30616"/>
        <label>1</label>
    </ligand>
</feature>
<feature type="binding site" evidence="1">
    <location>
        <position position="175"/>
    </location>
    <ligand>
        <name>ATP</name>
        <dbReference type="ChEBI" id="CHEBI:30616"/>
        <label>1</label>
    </ligand>
</feature>
<feature type="binding site" evidence="1">
    <location>
        <position position="176"/>
    </location>
    <ligand>
        <name>ATP</name>
        <dbReference type="ChEBI" id="CHEBI:30616"/>
        <label>1</label>
    </ligand>
</feature>
<feature type="binding site" evidence="1">
    <location>
        <position position="208"/>
    </location>
    <ligand>
        <name>ATP</name>
        <dbReference type="ChEBI" id="CHEBI:30616"/>
        <label>1</label>
    </ligand>
</feature>
<feature type="binding site" evidence="1">
    <location>
        <position position="210"/>
    </location>
    <ligand>
        <name>ATP</name>
        <dbReference type="ChEBI" id="CHEBI:30616"/>
        <label>1</label>
    </ligand>
</feature>
<feature type="binding site" evidence="1">
    <location>
        <position position="215"/>
    </location>
    <ligand>
        <name>ATP</name>
        <dbReference type="ChEBI" id="CHEBI:30616"/>
        <label>1</label>
    </ligand>
</feature>
<feature type="binding site" evidence="1">
    <location>
        <position position="241"/>
    </location>
    <ligand>
        <name>ATP</name>
        <dbReference type="ChEBI" id="CHEBI:30616"/>
        <label>1</label>
    </ligand>
</feature>
<feature type="binding site" evidence="1">
    <location>
        <position position="242"/>
    </location>
    <ligand>
        <name>ATP</name>
        <dbReference type="ChEBI" id="CHEBI:30616"/>
        <label>1</label>
    </ligand>
</feature>
<feature type="binding site" evidence="1">
    <location>
        <position position="243"/>
    </location>
    <ligand>
        <name>ATP</name>
        <dbReference type="ChEBI" id="CHEBI:30616"/>
        <label>1</label>
    </ligand>
</feature>
<feature type="binding site" evidence="1">
    <location>
        <position position="284"/>
    </location>
    <ligand>
        <name>ATP</name>
        <dbReference type="ChEBI" id="CHEBI:30616"/>
        <label>1</label>
    </ligand>
</feature>
<feature type="binding site" evidence="1">
    <location>
        <position position="284"/>
    </location>
    <ligand>
        <name>Mg(2+)</name>
        <dbReference type="ChEBI" id="CHEBI:18420"/>
        <label>1</label>
    </ligand>
</feature>
<feature type="binding site" evidence="1">
    <location>
        <position position="284"/>
    </location>
    <ligand>
        <name>Mn(2+)</name>
        <dbReference type="ChEBI" id="CHEBI:29035"/>
        <label>1</label>
    </ligand>
</feature>
<feature type="binding site" evidence="1">
    <location>
        <position position="298"/>
    </location>
    <ligand>
        <name>ATP</name>
        <dbReference type="ChEBI" id="CHEBI:30616"/>
        <label>1</label>
    </ligand>
</feature>
<feature type="binding site" evidence="1">
    <location>
        <position position="298"/>
    </location>
    <ligand>
        <name>Mg(2+)</name>
        <dbReference type="ChEBI" id="CHEBI:18420"/>
        <label>1</label>
    </ligand>
</feature>
<feature type="binding site" evidence="1">
    <location>
        <position position="298"/>
    </location>
    <ligand>
        <name>Mg(2+)</name>
        <dbReference type="ChEBI" id="CHEBI:18420"/>
        <label>2</label>
    </ligand>
</feature>
<feature type="binding site" evidence="1">
    <location>
        <position position="298"/>
    </location>
    <ligand>
        <name>Mn(2+)</name>
        <dbReference type="ChEBI" id="CHEBI:29035"/>
        <label>1</label>
    </ligand>
</feature>
<feature type="binding site" evidence="1">
    <location>
        <position position="298"/>
    </location>
    <ligand>
        <name>Mn(2+)</name>
        <dbReference type="ChEBI" id="CHEBI:29035"/>
        <label>2</label>
    </ligand>
</feature>
<feature type="binding site" evidence="1">
    <location>
        <position position="300"/>
    </location>
    <ligand>
        <name>Mg(2+)</name>
        <dbReference type="ChEBI" id="CHEBI:18420"/>
        <label>2</label>
    </ligand>
</feature>
<feature type="binding site" evidence="1">
    <location>
        <position position="300"/>
    </location>
    <ligand>
        <name>Mn(2+)</name>
        <dbReference type="ChEBI" id="CHEBI:29035"/>
        <label>2</label>
    </ligand>
</feature>
<feature type="binding site" evidence="1">
    <location>
        <position position="707"/>
    </location>
    <ligand>
        <name>ATP</name>
        <dbReference type="ChEBI" id="CHEBI:30616"/>
        <label>2</label>
    </ligand>
</feature>
<feature type="binding site" evidence="1">
    <location>
        <position position="746"/>
    </location>
    <ligand>
        <name>ATP</name>
        <dbReference type="ChEBI" id="CHEBI:30616"/>
        <label>2</label>
    </ligand>
</feature>
<feature type="binding site" evidence="1">
    <location>
        <position position="748"/>
    </location>
    <ligand>
        <name>ATP</name>
        <dbReference type="ChEBI" id="CHEBI:30616"/>
        <label>2</label>
    </ligand>
</feature>
<feature type="binding site" evidence="1">
    <location>
        <position position="752"/>
    </location>
    <ligand>
        <name>ATP</name>
        <dbReference type="ChEBI" id="CHEBI:30616"/>
        <label>2</label>
    </ligand>
</feature>
<feature type="binding site" evidence="1">
    <location>
        <position position="777"/>
    </location>
    <ligand>
        <name>ATP</name>
        <dbReference type="ChEBI" id="CHEBI:30616"/>
        <label>2</label>
    </ligand>
</feature>
<feature type="binding site" evidence="1">
    <location>
        <position position="778"/>
    </location>
    <ligand>
        <name>ATP</name>
        <dbReference type="ChEBI" id="CHEBI:30616"/>
        <label>2</label>
    </ligand>
</feature>
<feature type="binding site" evidence="1">
    <location>
        <position position="779"/>
    </location>
    <ligand>
        <name>ATP</name>
        <dbReference type="ChEBI" id="CHEBI:30616"/>
        <label>2</label>
    </ligand>
</feature>
<feature type="binding site" evidence="1">
    <location>
        <position position="780"/>
    </location>
    <ligand>
        <name>ATP</name>
        <dbReference type="ChEBI" id="CHEBI:30616"/>
        <label>2</label>
    </ligand>
</feature>
<feature type="binding site" evidence="1">
    <location>
        <position position="820"/>
    </location>
    <ligand>
        <name>ATP</name>
        <dbReference type="ChEBI" id="CHEBI:30616"/>
        <label>2</label>
    </ligand>
</feature>
<feature type="binding site" evidence="1">
    <location>
        <position position="820"/>
    </location>
    <ligand>
        <name>Mg(2+)</name>
        <dbReference type="ChEBI" id="CHEBI:18420"/>
        <label>3</label>
    </ligand>
</feature>
<feature type="binding site" evidence="1">
    <location>
        <position position="820"/>
    </location>
    <ligand>
        <name>Mn(2+)</name>
        <dbReference type="ChEBI" id="CHEBI:29035"/>
        <label>3</label>
    </ligand>
</feature>
<feature type="binding site" evidence="1">
    <location>
        <position position="832"/>
    </location>
    <ligand>
        <name>ATP</name>
        <dbReference type="ChEBI" id="CHEBI:30616"/>
        <label>2</label>
    </ligand>
</feature>
<feature type="binding site" evidence="1">
    <location>
        <position position="832"/>
    </location>
    <ligand>
        <name>Mg(2+)</name>
        <dbReference type="ChEBI" id="CHEBI:18420"/>
        <label>3</label>
    </ligand>
</feature>
<feature type="binding site" evidence="1">
    <location>
        <position position="832"/>
    </location>
    <ligand>
        <name>Mg(2+)</name>
        <dbReference type="ChEBI" id="CHEBI:18420"/>
        <label>4</label>
    </ligand>
</feature>
<feature type="binding site" evidence="1">
    <location>
        <position position="832"/>
    </location>
    <ligand>
        <name>Mn(2+)</name>
        <dbReference type="ChEBI" id="CHEBI:29035"/>
        <label>3</label>
    </ligand>
</feature>
<feature type="binding site" evidence="1">
    <location>
        <position position="832"/>
    </location>
    <ligand>
        <name>Mn(2+)</name>
        <dbReference type="ChEBI" id="CHEBI:29035"/>
        <label>4</label>
    </ligand>
</feature>
<feature type="binding site" evidence="1">
    <location>
        <position position="834"/>
    </location>
    <ligand>
        <name>Mg(2+)</name>
        <dbReference type="ChEBI" id="CHEBI:18420"/>
        <label>4</label>
    </ligand>
</feature>
<feature type="binding site" evidence="1">
    <location>
        <position position="834"/>
    </location>
    <ligand>
        <name>Mn(2+)</name>
        <dbReference type="ChEBI" id="CHEBI:29035"/>
        <label>4</label>
    </ligand>
</feature>
<proteinExistence type="inferred from homology"/>
<sequence>MPKRDDIKTILVVGSGPIIIGQAAEFDYAGTQACLALKEEGYRVILVNSNPATIMTDKEIADKVYIEPLTHDFIARIIRKEQPDALLPTLGGQTGLNMAIQLHDSGVLEANNVKLLGTELESIQQAEDREMFRTLMNDLNVPVPESDIVNTVEQAFEFKEQVGYPLIVRPAFTMGGTGGGICHNDAELKEVVSNGLHYSPATQCLIEKSIAGYKEIEYEVMRDKNDNAIVVCNMENIDPVGIHTGDSIVVAPSQTLSDVEYQMLRDVSLKVIRALGIEGGCNVQLALDPHSLNYYIIEVNPRVSRSSALASKATGYPIAKLAAKIAVGLTLDEMLNPITGTSYAAFEPTLDYVISKIPRFPFDKFEKGERELGTQMKATGEVMAIGRTYEESLLKAIRSLEYGVHHLGLSNGESYELDYIKERIGHQDDERLFFIGEAIRRGTSLEELHNMTKIDYFFLNKFQNIIDIEHELKNHQGDLEYLKYAKDYGFSDKVIAHRWDKEEKDIYQLRMSQNIKPVYKMVDTCAAEFESTTPYYYGTYEYENESIVTDKEKILVLGSGPIRIGQGVEFDYATVHAVWAIQNAGYEAIIVNNNPETVSTDFSISDKLYFEPLTEEDVMNIINLEQPKGVVVQFGGQTAINLADKLAQHGVKILGTSLEDLNRAEDRKEFEALLREIAVPQPQGKTATSPKEALENAREIGYPVVVRPSYVLGGRAMEIVDNDQELENYMTQAVKASPEHPVLVDRYLTGKEIEVDAISDGETVVIPGIMEHIERAGVHSGDSIAVYPPQTLTQDEINTLEDYTIKLAKGLNIKGLINIQFVIAHDGVYVLEVNPRSSRTVPFLSKITDIQMAQLAMRAIMGETLAEIGFKQGIQPYSEGVYVKAPVFSFNKLKNVDITLGPEMKSTGEVMGKDLTLEKALYKGLTGSGFEVKDHGTVLMTVSDKDKDEIVKIAHRLNEIGYKILATRGTAQKLKDHNIPVEVVGKIGGEDDLLTRIQNGEVQIVINTMTKGKEIERDGFQIRRTTVENGVPCLTSLDTASALTNVIESMTFTMRNV</sequence>